<dbReference type="EMBL" id="AB014759">
    <property type="protein sequence ID" value="BAA28621.1"/>
    <property type="molecule type" value="mRNA"/>
</dbReference>
<dbReference type="EMBL" id="AL023094">
    <property type="protein sequence ID" value="CAA18828.1"/>
    <property type="molecule type" value="Genomic_DNA"/>
</dbReference>
<dbReference type="EMBL" id="AL161585">
    <property type="protein sequence ID" value="CAB80166.1"/>
    <property type="molecule type" value="Genomic_DNA"/>
</dbReference>
<dbReference type="EMBL" id="CP002687">
    <property type="protein sequence ID" value="AEE86385.1"/>
    <property type="molecule type" value="Genomic_DNA"/>
</dbReference>
<dbReference type="EMBL" id="BT029161">
    <property type="protein sequence ID" value="ABJ17096.1"/>
    <property type="molecule type" value="mRNA"/>
</dbReference>
<dbReference type="PIR" id="T05269">
    <property type="entry name" value="T05269"/>
</dbReference>
<dbReference type="RefSeq" id="NP_195175.1">
    <property type="nucleotide sequence ID" value="NM_119614.6"/>
</dbReference>
<dbReference type="SMR" id="O65902"/>
<dbReference type="FunCoup" id="O65902">
    <property type="interactions" value="2901"/>
</dbReference>
<dbReference type="STRING" id="3702.O65902"/>
<dbReference type="GlyGen" id="O65902">
    <property type="glycosylation" value="1 site"/>
</dbReference>
<dbReference type="iPTMnet" id="O65902"/>
<dbReference type="MetOSite" id="O65902"/>
<dbReference type="PaxDb" id="3702-AT4G34490.1"/>
<dbReference type="ProteomicsDB" id="244636"/>
<dbReference type="DNASU" id="829600"/>
<dbReference type="EnsemblPlants" id="AT4G34490.1">
    <property type="protein sequence ID" value="AT4G34490.1"/>
    <property type="gene ID" value="AT4G34490"/>
</dbReference>
<dbReference type="GeneID" id="829600"/>
<dbReference type="Gramene" id="AT4G34490.1">
    <property type="protein sequence ID" value="AT4G34490.1"/>
    <property type="gene ID" value="AT4G34490"/>
</dbReference>
<dbReference type="KEGG" id="ath:AT4G34490"/>
<dbReference type="Araport" id="AT4G34490"/>
<dbReference type="TAIR" id="AT4G34490">
    <property type="gene designation" value="CAP1"/>
</dbReference>
<dbReference type="eggNOG" id="KOG2675">
    <property type="taxonomic scope" value="Eukaryota"/>
</dbReference>
<dbReference type="HOGENOM" id="CLU_015780_1_0_1"/>
<dbReference type="InParanoid" id="O65902"/>
<dbReference type="OMA" id="KSQQTHK"/>
<dbReference type="OrthoDB" id="1601at2759"/>
<dbReference type="PhylomeDB" id="O65902"/>
<dbReference type="PRO" id="PR:O65902"/>
<dbReference type="Proteomes" id="UP000006548">
    <property type="component" value="Chromosome 4"/>
</dbReference>
<dbReference type="ExpressionAtlas" id="O65902">
    <property type="expression patterns" value="baseline and differential"/>
</dbReference>
<dbReference type="GO" id="GO:0003779">
    <property type="term" value="F:actin binding"/>
    <property type="evidence" value="ECO:0000314"/>
    <property type="project" value="TAIR"/>
</dbReference>
<dbReference type="GO" id="GO:0030036">
    <property type="term" value="P:actin cytoskeleton organization"/>
    <property type="evidence" value="ECO:0000304"/>
    <property type="project" value="TAIR"/>
</dbReference>
<dbReference type="GO" id="GO:0009826">
    <property type="term" value="P:unidimensional cell growth"/>
    <property type="evidence" value="ECO:0000315"/>
    <property type="project" value="TAIR"/>
</dbReference>
<dbReference type="FunFam" id="1.25.40.330:FF:000001">
    <property type="entry name" value="Adenylyl cyclase-associated protein"/>
    <property type="match status" value="1"/>
</dbReference>
<dbReference type="FunFam" id="2.160.20.70:FF:000006">
    <property type="entry name" value="Adenylyl cyclase-associated protein"/>
    <property type="match status" value="1"/>
</dbReference>
<dbReference type="Gene3D" id="2.160.20.70">
    <property type="match status" value="1"/>
</dbReference>
<dbReference type="Gene3D" id="1.25.40.330">
    <property type="entry name" value="Adenylate cyclase-associated CAP, N-terminal domain"/>
    <property type="match status" value="1"/>
</dbReference>
<dbReference type="InterPro" id="IPR001837">
    <property type="entry name" value="Adenylate_cyclase-assoc_CAP"/>
</dbReference>
<dbReference type="InterPro" id="IPR013912">
    <property type="entry name" value="Adenylate_cyclase-assoc_CAP_C"/>
</dbReference>
<dbReference type="InterPro" id="IPR013992">
    <property type="entry name" value="Adenylate_cyclase-assoc_CAP_N"/>
</dbReference>
<dbReference type="InterPro" id="IPR017901">
    <property type="entry name" value="C-CAP_CF_C-like"/>
</dbReference>
<dbReference type="InterPro" id="IPR016098">
    <property type="entry name" value="CAP/MinC_C"/>
</dbReference>
<dbReference type="InterPro" id="IPR036223">
    <property type="entry name" value="CAP_C_sf"/>
</dbReference>
<dbReference type="InterPro" id="IPR018106">
    <property type="entry name" value="CAP_CS_N"/>
</dbReference>
<dbReference type="InterPro" id="IPR053950">
    <property type="entry name" value="CAP_N"/>
</dbReference>
<dbReference type="InterPro" id="IPR036222">
    <property type="entry name" value="CAP_N_sf"/>
</dbReference>
<dbReference type="InterPro" id="IPR006599">
    <property type="entry name" value="CARP_motif"/>
</dbReference>
<dbReference type="PANTHER" id="PTHR10652">
    <property type="entry name" value="ADENYLYL CYCLASE-ASSOCIATED PROTEIN"/>
    <property type="match status" value="1"/>
</dbReference>
<dbReference type="PANTHER" id="PTHR10652:SF0">
    <property type="entry name" value="ADENYLYL CYCLASE-ASSOCIATED PROTEIN"/>
    <property type="match status" value="1"/>
</dbReference>
<dbReference type="Pfam" id="PF08603">
    <property type="entry name" value="CAP_C"/>
    <property type="match status" value="1"/>
</dbReference>
<dbReference type="Pfam" id="PF21938">
    <property type="entry name" value="CAP_N"/>
    <property type="match status" value="1"/>
</dbReference>
<dbReference type="Pfam" id="PF01213">
    <property type="entry name" value="CAP_N-CM"/>
    <property type="match status" value="1"/>
</dbReference>
<dbReference type="SMART" id="SM00673">
    <property type="entry name" value="CARP"/>
    <property type="match status" value="2"/>
</dbReference>
<dbReference type="SUPFAM" id="SSF69340">
    <property type="entry name" value="C-terminal domain of adenylylcyclase associated protein"/>
    <property type="match status" value="1"/>
</dbReference>
<dbReference type="SUPFAM" id="SSF101278">
    <property type="entry name" value="N-terminal domain of adenylylcyclase associated protein, CAP"/>
    <property type="match status" value="1"/>
</dbReference>
<dbReference type="PROSITE" id="PS51329">
    <property type="entry name" value="C_CAP_COFACTOR_C"/>
    <property type="match status" value="1"/>
</dbReference>
<dbReference type="PROSITE" id="PS01088">
    <property type="entry name" value="CAP_1"/>
    <property type="match status" value="1"/>
</dbReference>
<comment type="function">
    <text evidence="3 4 5">Actin monomer binding protein that accelerates the exchange of ADP for ATP. Regulates the pool of unpolymerized ATP-actin. Key intermediate between actin-depolymerizing factor (ADF)-mediated disassembly and the profilin-based nucleation and elongation machinery.</text>
</comment>
<comment type="tissue specificity">
    <text evidence="3 4">Expressed in roots, cotyledons, leaves, stems, flowers, pollen and shoots. Not detected in siliques.</text>
</comment>
<comment type="domain">
    <text evidence="3">The C-terminal domain (318-476) binds to actin.</text>
</comment>
<comment type="disruption phenotype">
    <text evidence="5">Stunted growth and reduced pollen germination and growth.</text>
</comment>
<comment type="similarity">
    <text evidence="6">Belongs to the CAP family.</text>
</comment>
<keyword id="KW-0009">Actin-binding</keyword>
<keyword id="KW-1185">Reference proteome</keyword>
<sequence>MEEDLIKRLEAAVTRLEGISSNGGGVVSLSRGGDFSSAAGIDIASSDPSILAYEDLISQCVGRALTAAEKIGGPVLDVTKIVAEAFASQKELLVRIKQTQKPDLAGLAGFLKPLNDVTMKANAMTEGKRSDFFNHLKAACDSLSALAWIAFTGKDCGMSMPIAHVEESWQMAEFYNNKVLVEYRNKDADHVEWAKALKELYLPGLREYVKSHYPLGPVWNASGKPASAPAKGPPGAPAPPPAPLFSAESSKPSSSSNQKQGMSAVFQQLSSGAVTSGLRKVTDDMKTKNRADRSGAVSAVEKETRTSKPAFSKTGPPKMELQMGRKWAVENQIGKKDLVISECDSKQSVYIYGCKDSVLQIQGKVNNITIDKCTKVGVVFTDVVAAFEIVNCNNVEVQCQGSAPTVSVDNTTGCQLYLNKDSLETAITTAKSSEINVMVPGATPDGDWVEHALPQQYNHVFTEGKFETTPVSHSGA</sequence>
<organism>
    <name type="scientific">Arabidopsis thaliana</name>
    <name type="common">Mouse-ear cress</name>
    <dbReference type="NCBI Taxonomy" id="3702"/>
    <lineage>
        <taxon>Eukaryota</taxon>
        <taxon>Viridiplantae</taxon>
        <taxon>Streptophyta</taxon>
        <taxon>Embryophyta</taxon>
        <taxon>Tracheophyta</taxon>
        <taxon>Spermatophyta</taxon>
        <taxon>Magnoliopsida</taxon>
        <taxon>eudicotyledons</taxon>
        <taxon>Gunneridae</taxon>
        <taxon>Pentapetalae</taxon>
        <taxon>rosids</taxon>
        <taxon>malvids</taxon>
        <taxon>Brassicales</taxon>
        <taxon>Brassicaceae</taxon>
        <taxon>Camelineae</taxon>
        <taxon>Arabidopsis</taxon>
    </lineage>
</organism>
<name>ACAP1_ARATH</name>
<feature type="chain" id="PRO_0000424560" description="Cyclase-associated protein 1">
    <location>
        <begin position="1"/>
        <end position="476"/>
    </location>
</feature>
<feature type="domain" description="C-CAP/cofactor C-like" evidence="1">
    <location>
        <begin position="316"/>
        <end position="453"/>
    </location>
</feature>
<feature type="region of interest" description="Disordered" evidence="2">
    <location>
        <begin position="224"/>
        <end position="262"/>
    </location>
</feature>
<feature type="region of interest" description="Disordered" evidence="2">
    <location>
        <begin position="277"/>
        <end position="319"/>
    </location>
</feature>
<feature type="compositionally biased region" description="Pro residues" evidence="2">
    <location>
        <begin position="231"/>
        <end position="243"/>
    </location>
</feature>
<feature type="compositionally biased region" description="Low complexity" evidence="2">
    <location>
        <begin position="246"/>
        <end position="256"/>
    </location>
</feature>
<feature type="compositionally biased region" description="Basic and acidic residues" evidence="2">
    <location>
        <begin position="280"/>
        <end position="293"/>
    </location>
</feature>
<reference key="1">
    <citation type="journal article" date="2002" name="Plant Cell">
        <title>Arabidopsis CAP regulates the actin cytoskeleton necessary for plant cell elongation and division.</title>
        <authorList>
            <person name="Barrero R.A."/>
            <person name="Umeda M."/>
            <person name="Yamamura S."/>
            <person name="Uchimiya H."/>
        </authorList>
    </citation>
    <scope>NUCLEOTIDE SEQUENCE [MRNA]</scope>
    <scope>FUNCTION</scope>
    <scope>TISSUE SPECIFICITY</scope>
    <scope>DOMAIN</scope>
</reference>
<reference key="2">
    <citation type="journal article" date="1999" name="Nature">
        <title>Sequence and analysis of chromosome 4 of the plant Arabidopsis thaliana.</title>
        <authorList>
            <person name="Mayer K.F.X."/>
            <person name="Schueller C."/>
            <person name="Wambutt R."/>
            <person name="Murphy G."/>
            <person name="Volckaert G."/>
            <person name="Pohl T."/>
            <person name="Duesterhoeft A."/>
            <person name="Stiekema W."/>
            <person name="Entian K.-D."/>
            <person name="Terryn N."/>
            <person name="Harris B."/>
            <person name="Ansorge W."/>
            <person name="Brandt P."/>
            <person name="Grivell L.A."/>
            <person name="Rieger M."/>
            <person name="Weichselgartner M."/>
            <person name="de Simone V."/>
            <person name="Obermaier B."/>
            <person name="Mache R."/>
            <person name="Mueller M."/>
            <person name="Kreis M."/>
            <person name="Delseny M."/>
            <person name="Puigdomenech P."/>
            <person name="Watson M."/>
            <person name="Schmidtheini T."/>
            <person name="Reichert B."/>
            <person name="Portetelle D."/>
            <person name="Perez-Alonso M."/>
            <person name="Boutry M."/>
            <person name="Bancroft I."/>
            <person name="Vos P."/>
            <person name="Hoheisel J."/>
            <person name="Zimmermann W."/>
            <person name="Wedler H."/>
            <person name="Ridley P."/>
            <person name="Langham S.-A."/>
            <person name="McCullagh B."/>
            <person name="Bilham L."/>
            <person name="Robben J."/>
            <person name="van der Schueren J."/>
            <person name="Grymonprez B."/>
            <person name="Chuang Y.-J."/>
            <person name="Vandenbussche F."/>
            <person name="Braeken M."/>
            <person name="Weltjens I."/>
            <person name="Voet M."/>
            <person name="Bastiaens I."/>
            <person name="Aert R."/>
            <person name="Defoor E."/>
            <person name="Weitzenegger T."/>
            <person name="Bothe G."/>
            <person name="Ramsperger U."/>
            <person name="Hilbert H."/>
            <person name="Braun M."/>
            <person name="Holzer E."/>
            <person name="Brandt A."/>
            <person name="Peters S."/>
            <person name="van Staveren M."/>
            <person name="Dirkse W."/>
            <person name="Mooijman P."/>
            <person name="Klein Lankhorst R."/>
            <person name="Rose M."/>
            <person name="Hauf J."/>
            <person name="Koetter P."/>
            <person name="Berneiser S."/>
            <person name="Hempel S."/>
            <person name="Feldpausch M."/>
            <person name="Lamberth S."/>
            <person name="Van den Daele H."/>
            <person name="De Keyser A."/>
            <person name="Buysshaert C."/>
            <person name="Gielen J."/>
            <person name="Villarroel R."/>
            <person name="De Clercq R."/>
            <person name="van Montagu M."/>
            <person name="Rogers J."/>
            <person name="Cronin A."/>
            <person name="Quail M.A."/>
            <person name="Bray-Allen S."/>
            <person name="Clark L."/>
            <person name="Doggett J."/>
            <person name="Hall S."/>
            <person name="Kay M."/>
            <person name="Lennard N."/>
            <person name="McLay K."/>
            <person name="Mayes R."/>
            <person name="Pettett A."/>
            <person name="Rajandream M.A."/>
            <person name="Lyne M."/>
            <person name="Benes V."/>
            <person name="Rechmann S."/>
            <person name="Borkova D."/>
            <person name="Bloecker H."/>
            <person name="Scharfe M."/>
            <person name="Grimm M."/>
            <person name="Loehnert T.-H."/>
            <person name="Dose S."/>
            <person name="de Haan M."/>
            <person name="Maarse A.C."/>
            <person name="Schaefer M."/>
            <person name="Mueller-Auer S."/>
            <person name="Gabel C."/>
            <person name="Fuchs M."/>
            <person name="Fartmann B."/>
            <person name="Granderath K."/>
            <person name="Dauner D."/>
            <person name="Herzl A."/>
            <person name="Neumann S."/>
            <person name="Argiriou A."/>
            <person name="Vitale D."/>
            <person name="Liguori R."/>
            <person name="Piravandi E."/>
            <person name="Massenet O."/>
            <person name="Quigley F."/>
            <person name="Clabauld G."/>
            <person name="Muendlein A."/>
            <person name="Felber R."/>
            <person name="Schnabl S."/>
            <person name="Hiller R."/>
            <person name="Schmidt W."/>
            <person name="Lecharny A."/>
            <person name="Aubourg S."/>
            <person name="Chefdor F."/>
            <person name="Cooke R."/>
            <person name="Berger C."/>
            <person name="Monfort A."/>
            <person name="Casacuberta E."/>
            <person name="Gibbons T."/>
            <person name="Weber N."/>
            <person name="Vandenbol M."/>
            <person name="Bargues M."/>
            <person name="Terol J."/>
            <person name="Torres A."/>
            <person name="Perez-Perez A."/>
            <person name="Purnelle B."/>
            <person name="Bent E."/>
            <person name="Johnson S."/>
            <person name="Tacon D."/>
            <person name="Jesse T."/>
            <person name="Heijnen L."/>
            <person name="Schwarz S."/>
            <person name="Scholler P."/>
            <person name="Heber S."/>
            <person name="Francs P."/>
            <person name="Bielke C."/>
            <person name="Frishman D."/>
            <person name="Haase D."/>
            <person name="Lemcke K."/>
            <person name="Mewes H.-W."/>
            <person name="Stocker S."/>
            <person name="Zaccaria P."/>
            <person name="Bevan M."/>
            <person name="Wilson R.K."/>
            <person name="de la Bastide M."/>
            <person name="Habermann K."/>
            <person name="Parnell L."/>
            <person name="Dedhia N."/>
            <person name="Gnoj L."/>
            <person name="Schutz K."/>
            <person name="Huang E."/>
            <person name="Spiegel L."/>
            <person name="Sekhon M."/>
            <person name="Murray J."/>
            <person name="Sheet P."/>
            <person name="Cordes M."/>
            <person name="Abu-Threideh J."/>
            <person name="Stoneking T."/>
            <person name="Kalicki J."/>
            <person name="Graves T."/>
            <person name="Harmon G."/>
            <person name="Edwards J."/>
            <person name="Latreille P."/>
            <person name="Courtney L."/>
            <person name="Cloud J."/>
            <person name="Abbott A."/>
            <person name="Scott K."/>
            <person name="Johnson D."/>
            <person name="Minx P."/>
            <person name="Bentley D."/>
            <person name="Fulton B."/>
            <person name="Miller N."/>
            <person name="Greco T."/>
            <person name="Kemp K."/>
            <person name="Kramer J."/>
            <person name="Fulton L."/>
            <person name="Mardis E."/>
            <person name="Dante M."/>
            <person name="Pepin K."/>
            <person name="Hillier L.W."/>
            <person name="Nelson J."/>
            <person name="Spieth J."/>
            <person name="Ryan E."/>
            <person name="Andrews S."/>
            <person name="Geisel C."/>
            <person name="Layman D."/>
            <person name="Du H."/>
            <person name="Ali J."/>
            <person name="Berghoff A."/>
            <person name="Jones K."/>
            <person name="Drone K."/>
            <person name="Cotton M."/>
            <person name="Joshu C."/>
            <person name="Antonoiu B."/>
            <person name="Zidanic M."/>
            <person name="Strong C."/>
            <person name="Sun H."/>
            <person name="Lamar B."/>
            <person name="Yordan C."/>
            <person name="Ma P."/>
            <person name="Zhong J."/>
            <person name="Preston R."/>
            <person name="Vil D."/>
            <person name="Shekher M."/>
            <person name="Matero A."/>
            <person name="Shah R."/>
            <person name="Swaby I.K."/>
            <person name="O'Shaughnessy A."/>
            <person name="Rodriguez M."/>
            <person name="Hoffman J."/>
            <person name="Till S."/>
            <person name="Granat S."/>
            <person name="Shohdy N."/>
            <person name="Hasegawa A."/>
            <person name="Hameed A."/>
            <person name="Lodhi M."/>
            <person name="Johnson A."/>
            <person name="Chen E."/>
            <person name="Marra M.A."/>
            <person name="Martienssen R."/>
            <person name="McCombie W.R."/>
        </authorList>
    </citation>
    <scope>NUCLEOTIDE SEQUENCE [LARGE SCALE GENOMIC DNA]</scope>
    <source>
        <strain>cv. Columbia</strain>
    </source>
</reference>
<reference key="3">
    <citation type="journal article" date="2017" name="Plant J.">
        <title>Araport11: a complete reannotation of the Arabidopsis thaliana reference genome.</title>
        <authorList>
            <person name="Cheng C.Y."/>
            <person name="Krishnakumar V."/>
            <person name="Chan A.P."/>
            <person name="Thibaud-Nissen F."/>
            <person name="Schobel S."/>
            <person name="Town C.D."/>
        </authorList>
    </citation>
    <scope>GENOME REANNOTATION</scope>
    <source>
        <strain>cv. Columbia</strain>
    </source>
</reference>
<reference key="4">
    <citation type="submission" date="2006-10" db="EMBL/GenBank/DDBJ databases">
        <title>Arabidopsis ORF clone.</title>
        <authorList>
            <person name="Bautista V.R."/>
            <person name="Kim C.J."/>
            <person name="Chen H."/>
            <person name="Quinitio C."/>
            <person name="Ecker J.R."/>
        </authorList>
    </citation>
    <scope>NUCLEOTIDE SEQUENCE [LARGE SCALE MRNA]</scope>
    <source>
        <strain>cv. Columbia</strain>
    </source>
</reference>
<reference key="5">
    <citation type="journal article" date="2007" name="J. Cell Sci.">
        <title>Arabidopsis CAP1 - a key regulator of actin organisation and development.</title>
        <authorList>
            <person name="Deeks M.J."/>
            <person name="Rodrigues C."/>
            <person name="Dimmock S."/>
            <person name="Ketelaar T."/>
            <person name="Maciver S.K."/>
            <person name="Malho R."/>
            <person name="Hussey P.J."/>
        </authorList>
    </citation>
    <scope>FUNCTION</scope>
    <scope>DISRUPTION PHENOTYPE</scope>
</reference>
<reference key="6">
    <citation type="journal article" date="2007" name="Mol. Biol. Cell">
        <title>Identification of Arabidopsis cyclase-associated protein 1 as the first nucleotide exchange factor for plant actin.</title>
        <authorList>
            <person name="Chaudhry F."/>
            <person name="Guerin C."/>
            <person name="von Witsch M."/>
            <person name="Blanchoin L."/>
            <person name="Staiger C.J."/>
        </authorList>
    </citation>
    <scope>FUNCTION</scope>
    <scope>TISSUE SPECIFICITY</scope>
</reference>
<proteinExistence type="evidence at transcript level"/>
<accession>O65902</accession>
<evidence type="ECO:0000255" key="1">
    <source>
        <dbReference type="PROSITE-ProRule" id="PRU00659"/>
    </source>
</evidence>
<evidence type="ECO:0000256" key="2">
    <source>
        <dbReference type="SAM" id="MobiDB-lite"/>
    </source>
</evidence>
<evidence type="ECO:0000269" key="3">
    <source>
    </source>
</evidence>
<evidence type="ECO:0000269" key="4">
    <source>
    </source>
</evidence>
<evidence type="ECO:0000269" key="5">
    <source>
    </source>
</evidence>
<evidence type="ECO:0000305" key="6"/>
<gene>
    <name type="primary">CAP1</name>
    <name type="ordered locus">At4g34490</name>
    <name type="ORF">T4L20.70</name>
</gene>
<protein>
    <recommendedName>
        <fullName>Cyclase-associated protein 1</fullName>
        <shortName>AtCAP1</shortName>
    </recommendedName>
    <alternativeName>
        <fullName>Adenylyl cyclase-associated protein</fullName>
    </alternativeName>
</protein>